<name>RS11_DEIRA</name>
<evidence type="ECO:0000255" key="1">
    <source>
        <dbReference type="HAMAP-Rule" id="MF_01310"/>
    </source>
</evidence>
<evidence type="ECO:0000305" key="2"/>
<comment type="function">
    <text evidence="1">Located on the platform of the 30S subunit, it bridges several disparate RNA helices of the 16S rRNA. Forms part of the Shine-Dalgarno cleft in the 70S ribosome.</text>
</comment>
<comment type="subunit">
    <text evidence="1">Part of the 30S ribosomal subunit. Interacts with proteins S7 and S18. Binds to IF-3.</text>
</comment>
<comment type="similarity">
    <text evidence="1">Belongs to the universal ribosomal protein uS11 family.</text>
</comment>
<organism>
    <name type="scientific">Deinococcus radiodurans (strain ATCC 13939 / DSM 20539 / JCM 16871 / CCUG 27074 / LMG 4051 / NBRC 15346 / NCIMB 9279 / VKM B-1422 / R1)</name>
    <dbReference type="NCBI Taxonomy" id="243230"/>
    <lineage>
        <taxon>Bacteria</taxon>
        <taxon>Thermotogati</taxon>
        <taxon>Deinococcota</taxon>
        <taxon>Deinococci</taxon>
        <taxon>Deinococcales</taxon>
        <taxon>Deinococcaceae</taxon>
        <taxon>Deinococcus</taxon>
    </lineage>
</organism>
<accession>Q9RSJ8</accession>
<proteinExistence type="inferred from homology"/>
<gene>
    <name evidence="1" type="primary">rpsK</name>
    <name type="ordered locus">DR_2126</name>
</gene>
<sequence length="131" mass="13791">MAKPTKGKAPRRSRRNISAGRAYVHASYNNTIVTITDLDGNSVAWSSGGTIGYKGSKKGTPYAAQLAAADAVKKAQTSFGMAAVDVIVRGSGSGREQAIRAIQASGIEVRSIMDDSPVPHNGCRPKKKFRA</sequence>
<keyword id="KW-1185">Reference proteome</keyword>
<keyword id="KW-0687">Ribonucleoprotein</keyword>
<keyword id="KW-0689">Ribosomal protein</keyword>
<keyword id="KW-0694">RNA-binding</keyword>
<keyword id="KW-0699">rRNA-binding</keyword>
<dbReference type="EMBL" id="AE000513">
    <property type="protein sequence ID" value="AAF11676.1"/>
    <property type="molecule type" value="Genomic_DNA"/>
</dbReference>
<dbReference type="PIR" id="G75312">
    <property type="entry name" value="G75312"/>
</dbReference>
<dbReference type="RefSeq" id="NP_295849.1">
    <property type="nucleotide sequence ID" value="NC_001263.1"/>
</dbReference>
<dbReference type="RefSeq" id="WP_010888757.1">
    <property type="nucleotide sequence ID" value="NZ_JMLF01000004.1"/>
</dbReference>
<dbReference type="SMR" id="Q9RSJ8"/>
<dbReference type="FunCoup" id="Q9RSJ8">
    <property type="interactions" value="461"/>
</dbReference>
<dbReference type="STRING" id="243230.DR_2126"/>
<dbReference type="PaxDb" id="243230-DR_2126"/>
<dbReference type="EnsemblBacteria" id="AAF11676">
    <property type="protein sequence ID" value="AAF11676"/>
    <property type="gene ID" value="DR_2126"/>
</dbReference>
<dbReference type="GeneID" id="69518368"/>
<dbReference type="KEGG" id="dra:DR_2126"/>
<dbReference type="PATRIC" id="fig|243230.17.peg.2349"/>
<dbReference type="eggNOG" id="COG0100">
    <property type="taxonomic scope" value="Bacteria"/>
</dbReference>
<dbReference type="HOGENOM" id="CLU_072439_5_0_0"/>
<dbReference type="InParanoid" id="Q9RSJ8"/>
<dbReference type="OrthoDB" id="9806415at2"/>
<dbReference type="Proteomes" id="UP000002524">
    <property type="component" value="Chromosome 1"/>
</dbReference>
<dbReference type="GO" id="GO:0022627">
    <property type="term" value="C:cytosolic small ribosomal subunit"/>
    <property type="evidence" value="ECO:0000318"/>
    <property type="project" value="GO_Central"/>
</dbReference>
<dbReference type="GO" id="GO:0019843">
    <property type="term" value="F:rRNA binding"/>
    <property type="evidence" value="ECO:0007669"/>
    <property type="project" value="UniProtKB-UniRule"/>
</dbReference>
<dbReference type="GO" id="GO:0003735">
    <property type="term" value="F:structural constituent of ribosome"/>
    <property type="evidence" value="ECO:0000318"/>
    <property type="project" value="GO_Central"/>
</dbReference>
<dbReference type="GO" id="GO:0006412">
    <property type="term" value="P:translation"/>
    <property type="evidence" value="ECO:0000318"/>
    <property type="project" value="GO_Central"/>
</dbReference>
<dbReference type="FunFam" id="3.30.420.80:FF:000010">
    <property type="entry name" value="30S ribosomal protein S11"/>
    <property type="match status" value="1"/>
</dbReference>
<dbReference type="Gene3D" id="3.30.420.80">
    <property type="entry name" value="Ribosomal protein S11"/>
    <property type="match status" value="1"/>
</dbReference>
<dbReference type="HAMAP" id="MF_01310">
    <property type="entry name" value="Ribosomal_uS11"/>
    <property type="match status" value="1"/>
</dbReference>
<dbReference type="InterPro" id="IPR001971">
    <property type="entry name" value="Ribosomal_uS11"/>
</dbReference>
<dbReference type="InterPro" id="IPR019981">
    <property type="entry name" value="Ribosomal_uS11_bac-type"/>
</dbReference>
<dbReference type="InterPro" id="IPR018102">
    <property type="entry name" value="Ribosomal_uS11_CS"/>
</dbReference>
<dbReference type="InterPro" id="IPR036967">
    <property type="entry name" value="Ribosomal_uS11_sf"/>
</dbReference>
<dbReference type="NCBIfam" id="NF003698">
    <property type="entry name" value="PRK05309.1"/>
    <property type="match status" value="1"/>
</dbReference>
<dbReference type="NCBIfam" id="TIGR03632">
    <property type="entry name" value="uS11_bact"/>
    <property type="match status" value="1"/>
</dbReference>
<dbReference type="PANTHER" id="PTHR11759">
    <property type="entry name" value="40S RIBOSOMAL PROTEIN S14/30S RIBOSOMAL PROTEIN S11"/>
    <property type="match status" value="1"/>
</dbReference>
<dbReference type="Pfam" id="PF00411">
    <property type="entry name" value="Ribosomal_S11"/>
    <property type="match status" value="1"/>
</dbReference>
<dbReference type="PIRSF" id="PIRSF002131">
    <property type="entry name" value="Ribosomal_S11"/>
    <property type="match status" value="1"/>
</dbReference>
<dbReference type="SUPFAM" id="SSF53137">
    <property type="entry name" value="Translational machinery components"/>
    <property type="match status" value="1"/>
</dbReference>
<dbReference type="PROSITE" id="PS00054">
    <property type="entry name" value="RIBOSOMAL_S11"/>
    <property type="match status" value="1"/>
</dbReference>
<protein>
    <recommendedName>
        <fullName evidence="1">Small ribosomal subunit protein uS11</fullName>
    </recommendedName>
    <alternativeName>
        <fullName evidence="2">30S ribosomal protein S11</fullName>
    </alternativeName>
</protein>
<feature type="chain" id="PRO_0000123141" description="Small ribosomal subunit protein uS11">
    <location>
        <begin position="1"/>
        <end position="131"/>
    </location>
</feature>
<reference key="1">
    <citation type="journal article" date="1999" name="Science">
        <title>Genome sequence of the radioresistant bacterium Deinococcus radiodurans R1.</title>
        <authorList>
            <person name="White O."/>
            <person name="Eisen J.A."/>
            <person name="Heidelberg J.F."/>
            <person name="Hickey E.K."/>
            <person name="Peterson J.D."/>
            <person name="Dodson R.J."/>
            <person name="Haft D.H."/>
            <person name="Gwinn M.L."/>
            <person name="Nelson W.C."/>
            <person name="Richardson D.L."/>
            <person name="Moffat K.S."/>
            <person name="Qin H."/>
            <person name="Jiang L."/>
            <person name="Pamphile W."/>
            <person name="Crosby M."/>
            <person name="Shen M."/>
            <person name="Vamathevan J.J."/>
            <person name="Lam P."/>
            <person name="McDonald L.A."/>
            <person name="Utterback T.R."/>
            <person name="Zalewski C."/>
            <person name="Makarova K.S."/>
            <person name="Aravind L."/>
            <person name="Daly M.J."/>
            <person name="Minton K.W."/>
            <person name="Fleischmann R.D."/>
            <person name="Ketchum K.A."/>
            <person name="Nelson K.E."/>
            <person name="Salzberg S.L."/>
            <person name="Smith H.O."/>
            <person name="Venter J.C."/>
            <person name="Fraser C.M."/>
        </authorList>
    </citation>
    <scope>NUCLEOTIDE SEQUENCE [LARGE SCALE GENOMIC DNA]</scope>
    <source>
        <strain>ATCC 13939 / DSM 20539 / JCM 16871 / CCUG 27074 / LMG 4051 / NBRC 15346 / NCIMB 9279 / VKM B-1422 / R1</strain>
    </source>
</reference>